<keyword id="KW-0025">Alternative splicing</keyword>
<keyword id="KW-0175">Coiled coil</keyword>
<keyword id="KW-0963">Cytoplasm</keyword>
<keyword id="KW-0333">Golgi apparatus</keyword>
<keyword id="KW-1185">Reference proteome</keyword>
<feature type="chain" id="PRO_0000252445" description="RAB6-interacting golgin">
    <location>
        <begin position="1"/>
        <end position="368"/>
    </location>
</feature>
<feature type="region of interest" description="Disordered" evidence="3">
    <location>
        <begin position="1"/>
        <end position="43"/>
    </location>
</feature>
<feature type="region of interest" description="Disordered" evidence="3">
    <location>
        <begin position="55"/>
        <end position="133"/>
    </location>
</feature>
<feature type="region of interest" description="Necessary for interaction with RCHY1" evidence="1">
    <location>
        <begin position="188"/>
        <end position="368"/>
    </location>
</feature>
<feature type="region of interest" description="Disordered" evidence="3">
    <location>
        <begin position="302"/>
        <end position="368"/>
    </location>
</feature>
<feature type="coiled-coil region" evidence="2">
    <location>
        <begin position="145"/>
        <end position="310"/>
    </location>
</feature>
<feature type="compositionally biased region" description="Basic and acidic residues" evidence="3">
    <location>
        <begin position="11"/>
        <end position="27"/>
    </location>
</feature>
<feature type="compositionally biased region" description="Pro residues" evidence="3">
    <location>
        <begin position="80"/>
        <end position="89"/>
    </location>
</feature>
<feature type="compositionally biased region" description="Basic and acidic residues" evidence="3">
    <location>
        <begin position="114"/>
        <end position="133"/>
    </location>
</feature>
<feature type="splice variant" id="VSP_020979" description="In isoform 2." evidence="6">
    <location>
        <begin position="1"/>
        <end position="155"/>
    </location>
</feature>
<gene>
    <name type="primary">Gorab</name>
    <name type="synonym">Ntklbp1</name>
    <name type="synonym">Scyl1bp1</name>
</gene>
<sequence length="368" mass="41487">MAQDWAGFSEEELRRLKQNKDPFEPQRRIPVKKTRQQLQREKALLEQSQKLGLQDGSASLLPEQLLSAPKQRANSQKPRSPSPVAPSPLTPTSSSGDGKLPGVGSQPQEPGLENSHHGHKSAEVRAPKPDCKVEKKKMELQEKSRWEVLQQEQRLMEEKNKRKKALLAQAIAERSKKTQAETIKLKRIQKELQALDDMVSADIGILRNRIDQASLEYSYARKRFDRAEAEYITAKLDLQRKTETKEQLTEHLCTIIQQNELRKAKKLEELMQQLDVQADEEALQLEVEVEQLLREQEAEAAKQMASVERLCPPDGESVSSELAEENNEPQKQAPSPETDKPGKCCSSSPHRLDCPDPGAKNFSAAVAT</sequence>
<organism>
    <name type="scientific">Mus musculus</name>
    <name type="common">Mouse</name>
    <dbReference type="NCBI Taxonomy" id="10090"/>
    <lineage>
        <taxon>Eukaryota</taxon>
        <taxon>Metazoa</taxon>
        <taxon>Chordata</taxon>
        <taxon>Craniata</taxon>
        <taxon>Vertebrata</taxon>
        <taxon>Euteleostomi</taxon>
        <taxon>Mammalia</taxon>
        <taxon>Eutheria</taxon>
        <taxon>Euarchontoglires</taxon>
        <taxon>Glires</taxon>
        <taxon>Rodentia</taxon>
        <taxon>Myomorpha</taxon>
        <taxon>Muroidea</taxon>
        <taxon>Muridae</taxon>
        <taxon>Murinae</taxon>
        <taxon>Mus</taxon>
        <taxon>Mus</taxon>
    </lineage>
</organism>
<name>GORAB_MOUSE</name>
<evidence type="ECO:0000250" key="1"/>
<evidence type="ECO:0000255" key="2"/>
<evidence type="ECO:0000256" key="3">
    <source>
        <dbReference type="SAM" id="MobiDB-lite"/>
    </source>
</evidence>
<evidence type="ECO:0000269" key="4">
    <source>
    </source>
</evidence>
<evidence type="ECO:0000269" key="5">
    <source>
    </source>
</evidence>
<evidence type="ECO:0000303" key="6">
    <source>
    </source>
</evidence>
<evidence type="ECO:0000305" key="7"/>
<dbReference type="EMBL" id="AK039170">
    <property type="protein sequence ID" value="BAC30263.1"/>
    <property type="molecule type" value="mRNA"/>
</dbReference>
<dbReference type="EMBL" id="AK043953">
    <property type="protein sequence ID" value="BAC31712.1"/>
    <property type="molecule type" value="mRNA"/>
</dbReference>
<dbReference type="EMBL" id="AK165909">
    <property type="protein sequence ID" value="BAE38454.1"/>
    <property type="molecule type" value="mRNA"/>
</dbReference>
<dbReference type="EMBL" id="AK169151">
    <property type="protein sequence ID" value="BAE40930.1"/>
    <property type="molecule type" value="mRNA"/>
</dbReference>
<dbReference type="EMBL" id="BC119132">
    <property type="protein sequence ID" value="AAI19133.1"/>
    <property type="molecule type" value="mRNA"/>
</dbReference>
<dbReference type="EMBL" id="BC119134">
    <property type="protein sequence ID" value="AAI19135.1"/>
    <property type="molecule type" value="mRNA"/>
</dbReference>
<dbReference type="CCDS" id="CCDS15429.1">
    <molecule id="Q8BRM2-1"/>
</dbReference>
<dbReference type="RefSeq" id="NP_001300667.1">
    <molecule id="Q8BRM2-2"/>
    <property type="nucleotide sequence ID" value="NM_001313738.1"/>
</dbReference>
<dbReference type="RefSeq" id="NP_849214.2">
    <molecule id="Q8BRM2-1"/>
    <property type="nucleotide sequence ID" value="NM_178883.6"/>
</dbReference>
<dbReference type="SMR" id="Q8BRM2"/>
<dbReference type="BioGRID" id="221044">
    <property type="interactions" value="1"/>
</dbReference>
<dbReference type="FunCoup" id="Q8BRM2">
    <property type="interactions" value="3860"/>
</dbReference>
<dbReference type="STRING" id="10090.ENSMUSP00000036253"/>
<dbReference type="GlyGen" id="Q8BRM2">
    <property type="glycosylation" value="1 site, 1 O-linked glycan (1 site)"/>
</dbReference>
<dbReference type="iPTMnet" id="Q8BRM2"/>
<dbReference type="PhosphoSitePlus" id="Q8BRM2"/>
<dbReference type="SwissPalm" id="Q8BRM2"/>
<dbReference type="jPOST" id="Q8BRM2"/>
<dbReference type="PaxDb" id="10090-ENSMUSP00000036253"/>
<dbReference type="PeptideAtlas" id="Q8BRM2"/>
<dbReference type="ProteomicsDB" id="271420">
    <molecule id="Q8BRM2-1"/>
</dbReference>
<dbReference type="ProteomicsDB" id="271421">
    <molecule id="Q8BRM2-2"/>
</dbReference>
<dbReference type="Pumba" id="Q8BRM2"/>
<dbReference type="Antibodypedia" id="34371">
    <property type="antibodies" value="388 antibodies from 28 providers"/>
</dbReference>
<dbReference type="Ensembl" id="ENSMUST00000045138.6">
    <molecule id="Q8BRM2-1"/>
    <property type="protein sequence ID" value="ENSMUSP00000036253.5"/>
    <property type="gene ID" value="ENSMUSG00000040124.6"/>
</dbReference>
<dbReference type="GeneID" id="98376"/>
<dbReference type="KEGG" id="mmu:98376"/>
<dbReference type="UCSC" id="uc007dhl.1">
    <molecule id="Q8BRM2-1"/>
    <property type="organism name" value="mouse"/>
</dbReference>
<dbReference type="AGR" id="MGI:2138271"/>
<dbReference type="CTD" id="92344"/>
<dbReference type="MGI" id="MGI:2138271">
    <property type="gene designation" value="Gorab"/>
</dbReference>
<dbReference type="VEuPathDB" id="HostDB:ENSMUSG00000040124"/>
<dbReference type="eggNOG" id="ENOG502R60M">
    <property type="taxonomic scope" value="Eukaryota"/>
</dbReference>
<dbReference type="GeneTree" id="ENSGT00390000014886"/>
<dbReference type="HOGENOM" id="CLU_064636_0_0_1"/>
<dbReference type="InParanoid" id="Q8BRM2"/>
<dbReference type="OMA" id="PNCPNQE"/>
<dbReference type="OrthoDB" id="9909311at2759"/>
<dbReference type="PhylomeDB" id="Q8BRM2"/>
<dbReference type="TreeFam" id="TF324839"/>
<dbReference type="BioGRID-ORCS" id="98376">
    <property type="hits" value="1 hit in 76 CRISPR screens"/>
</dbReference>
<dbReference type="PRO" id="PR:Q8BRM2"/>
<dbReference type="Proteomes" id="UP000000589">
    <property type="component" value="Chromosome 1"/>
</dbReference>
<dbReference type="RNAct" id="Q8BRM2">
    <property type="molecule type" value="protein"/>
</dbReference>
<dbReference type="Bgee" id="ENSMUSG00000040124">
    <property type="expression patterns" value="Expressed in manus and 223 other cell types or tissues"/>
</dbReference>
<dbReference type="ExpressionAtlas" id="Q8BRM2">
    <property type="expression patterns" value="baseline and differential"/>
</dbReference>
<dbReference type="GO" id="GO:0005737">
    <property type="term" value="C:cytoplasm"/>
    <property type="evidence" value="ECO:0000314"/>
    <property type="project" value="HGNC-UCL"/>
</dbReference>
<dbReference type="GO" id="GO:0005829">
    <property type="term" value="C:cytosol"/>
    <property type="evidence" value="ECO:0007669"/>
    <property type="project" value="Ensembl"/>
</dbReference>
<dbReference type="GO" id="GO:0005794">
    <property type="term" value="C:Golgi apparatus"/>
    <property type="evidence" value="ECO:0007669"/>
    <property type="project" value="UniProtKB-SubCell"/>
</dbReference>
<dbReference type="GO" id="GO:0005730">
    <property type="term" value="C:nucleolus"/>
    <property type="evidence" value="ECO:0007669"/>
    <property type="project" value="Ensembl"/>
</dbReference>
<dbReference type="GO" id="GO:0005654">
    <property type="term" value="C:nucleoplasm"/>
    <property type="evidence" value="ECO:0007669"/>
    <property type="project" value="Ensembl"/>
</dbReference>
<dbReference type="GO" id="GO:0031069">
    <property type="term" value="P:hair follicle morphogenesis"/>
    <property type="evidence" value="ECO:0000315"/>
    <property type="project" value="MGI"/>
</dbReference>
<dbReference type="GO" id="GO:1905515">
    <property type="term" value="P:non-motile cilium assembly"/>
    <property type="evidence" value="ECO:0000315"/>
    <property type="project" value="MGI"/>
</dbReference>
<dbReference type="GO" id="GO:0045880">
    <property type="term" value="P:positive regulation of smoothened signaling pathway"/>
    <property type="evidence" value="ECO:0000315"/>
    <property type="project" value="MGI"/>
</dbReference>
<dbReference type="InterPro" id="IPR007033">
    <property type="entry name" value="GORAB"/>
</dbReference>
<dbReference type="PANTHER" id="PTHR21470:SF2">
    <property type="entry name" value="RAB6-INTERACTING GOLGIN"/>
    <property type="match status" value="1"/>
</dbReference>
<dbReference type="PANTHER" id="PTHR21470">
    <property type="entry name" value="RAB6-INTERACTING PROTEIN GORAB"/>
    <property type="match status" value="1"/>
</dbReference>
<dbReference type="Pfam" id="PF04949">
    <property type="entry name" value="Transcrip_act"/>
    <property type="match status" value="1"/>
</dbReference>
<proteinExistence type="evidence at protein level"/>
<comment type="subunit">
    <text evidence="1 4 5">Interacts with RCHY1 (By similarity). Interacts with SCYL1 and RAB6A/RAB6.</text>
</comment>
<comment type="subcellular location">
    <subcellularLocation>
        <location evidence="4">Cytoplasm</location>
    </subcellularLocation>
    <subcellularLocation>
        <location evidence="5">Golgi apparatus</location>
    </subcellularLocation>
</comment>
<comment type="alternative products">
    <event type="alternative splicing"/>
    <isoform>
        <id>Q8BRM2-1</id>
        <name>1</name>
        <sequence type="displayed"/>
    </isoform>
    <isoform>
        <id>Q8BRM2-2</id>
        <name>2</name>
        <sequence type="described" ref="VSP_020979"/>
    </isoform>
</comment>
<comment type="tissue specificity">
    <text evidence="4 5">Expressed in small intestine, kidney, skeletal muscle, lung, spleen, brain and heart. High expression is observed in osteoblasts and skin; also expressed in osteoclasts albeit at lower levels.</text>
</comment>
<comment type="similarity">
    <text evidence="7">Belongs to the GORAB family.</text>
</comment>
<accession>Q8BRM2</accession>
<accession>Q8CAA8</accession>
<reference key="1">
    <citation type="journal article" date="2003" name="J. Hum. Genet.">
        <title>Cloning and characterization of a novel gene which encodes a protein interacting with the mitosis-associated kinase-like protein NTKL.</title>
        <authorList>
            <person name="Di Y."/>
            <person name="Li J."/>
            <person name="Fang J."/>
            <person name="Xu Z."/>
            <person name="He X."/>
            <person name="Zhang F."/>
            <person name="Ling J."/>
            <person name="Li X."/>
            <person name="Xu D."/>
            <person name="Li L."/>
            <person name="Li Y.Y."/>
            <person name="Huo K."/>
        </authorList>
    </citation>
    <scope>NUCLEOTIDE SEQUENCE [MRNA] (ISOFORM 1)</scope>
    <scope>INTERACTION WITH SCYL1</scope>
    <scope>SUBCELLULAR LOCATION</scope>
    <scope>TISSUE SPECIFICITY</scope>
    <source>
        <tissue>Fetus</tissue>
    </source>
</reference>
<reference key="2">
    <citation type="journal article" date="2002" name="Nature">
        <title>Analysis of the mouse transcriptome based on functional annotation of 60,770 full-length cDNAs.</title>
        <authorList>
            <person name="Okazaki Y."/>
            <person name="Furuno M."/>
            <person name="Kasukawa T."/>
            <person name="Adachi J."/>
            <person name="Bono H."/>
            <person name="Kondo S."/>
            <person name="Nikaido I."/>
            <person name="Osato N."/>
            <person name="Saito R."/>
            <person name="Suzuki H."/>
            <person name="Yamanaka I."/>
            <person name="Kiyosawa H."/>
            <person name="Yagi K."/>
            <person name="Tomaru Y."/>
            <person name="Hasegawa Y."/>
            <person name="Nogami A."/>
            <person name="Schonbach C."/>
            <person name="Gojobori T."/>
            <person name="Baldarelli R."/>
            <person name="Hill D.P."/>
            <person name="Bult C."/>
            <person name="Hume D.A."/>
            <person name="Quackenbush J."/>
            <person name="Schriml L.M."/>
            <person name="Kanapin A."/>
            <person name="Matsuda H."/>
            <person name="Batalov S."/>
            <person name="Beisel K.W."/>
            <person name="Blake J.A."/>
            <person name="Bradt D."/>
            <person name="Brusic V."/>
            <person name="Chothia C."/>
            <person name="Corbani L.E."/>
            <person name="Cousins S."/>
            <person name="Dalla E."/>
            <person name="Dragani T.A."/>
            <person name="Fletcher C.F."/>
            <person name="Forrest A."/>
            <person name="Frazer K.S."/>
            <person name="Gaasterland T."/>
            <person name="Gariboldi M."/>
            <person name="Gissi C."/>
            <person name="Godzik A."/>
            <person name="Gough J."/>
            <person name="Grimmond S."/>
            <person name="Gustincich S."/>
            <person name="Hirokawa N."/>
            <person name="Jackson I.J."/>
            <person name="Jarvis E.D."/>
            <person name="Kanai A."/>
            <person name="Kawaji H."/>
            <person name="Kawasawa Y."/>
            <person name="Kedzierski R.M."/>
            <person name="King B.L."/>
            <person name="Konagaya A."/>
            <person name="Kurochkin I.V."/>
            <person name="Lee Y."/>
            <person name="Lenhard B."/>
            <person name="Lyons P.A."/>
            <person name="Maglott D.R."/>
            <person name="Maltais L."/>
            <person name="Marchionni L."/>
            <person name="McKenzie L."/>
            <person name="Miki H."/>
            <person name="Nagashima T."/>
            <person name="Numata K."/>
            <person name="Okido T."/>
            <person name="Pavan W.J."/>
            <person name="Pertea G."/>
            <person name="Pesole G."/>
            <person name="Petrovsky N."/>
            <person name="Pillai R."/>
            <person name="Pontius J.U."/>
            <person name="Qi D."/>
            <person name="Ramachandran S."/>
            <person name="Ravasi T."/>
            <person name="Reed J.C."/>
            <person name="Reed D.J."/>
            <person name="Reid J."/>
            <person name="Ring B.Z."/>
            <person name="Ringwald M."/>
            <person name="Sandelin A."/>
            <person name="Schneider C."/>
            <person name="Semple C.A."/>
            <person name="Setou M."/>
            <person name="Shimada K."/>
            <person name="Sultana R."/>
            <person name="Takenaka Y."/>
            <person name="Taylor M.S."/>
            <person name="Teasdale R.D."/>
            <person name="Tomita M."/>
            <person name="Verardo R."/>
            <person name="Wagner L."/>
            <person name="Wahlestedt C."/>
            <person name="Wang Y."/>
            <person name="Watanabe Y."/>
            <person name="Wells C."/>
            <person name="Wilming L.G."/>
            <person name="Wynshaw-Boris A."/>
            <person name="Yanagisawa M."/>
            <person name="Yang I."/>
            <person name="Yang L."/>
            <person name="Yuan Z."/>
            <person name="Zavolan M."/>
            <person name="Zhu Y."/>
            <person name="Zimmer A."/>
            <person name="Carninci P."/>
            <person name="Hayatsu N."/>
            <person name="Hirozane-Kishikawa T."/>
            <person name="Konno H."/>
            <person name="Nakamura M."/>
            <person name="Sakazume N."/>
            <person name="Sato K."/>
            <person name="Shiraki T."/>
            <person name="Waki K."/>
            <person name="Kawai J."/>
            <person name="Aizawa K."/>
            <person name="Arakawa T."/>
            <person name="Fukuda S."/>
            <person name="Hara A."/>
            <person name="Hashizume W."/>
            <person name="Imotani K."/>
            <person name="Ishii Y."/>
            <person name="Itoh M."/>
            <person name="Kagawa I."/>
            <person name="Miyazaki A."/>
            <person name="Sakai K."/>
            <person name="Sasaki D."/>
            <person name="Shibata K."/>
            <person name="Shinagawa A."/>
            <person name="Yasunishi A."/>
            <person name="Yoshino M."/>
            <person name="Waterston R."/>
            <person name="Lander E.S."/>
            <person name="Rogers J."/>
            <person name="Birney E."/>
            <person name="Hayashizaki Y."/>
        </authorList>
    </citation>
    <scope>NUCLEOTIDE SEQUENCE [LARGE SCALE MRNA] (ISOFORMS 1 AND 2)</scope>
    <source>
        <strain>C57BL/6J</strain>
        <tissue>Brain cortex</tissue>
        <tissue>Hypothalamus</tissue>
        <tissue>Kidney</tissue>
        <tissue>Lung</tissue>
    </source>
</reference>
<reference key="3">
    <citation type="journal article" date="2004" name="Genome Res.">
        <title>The status, quality, and expansion of the NIH full-length cDNA project: the Mammalian Gene Collection (MGC).</title>
        <authorList>
            <consortium name="The MGC Project Team"/>
        </authorList>
    </citation>
    <scope>NUCLEOTIDE SEQUENCE [LARGE SCALE MRNA]</scope>
    <source>
        <tissue>Brain</tissue>
    </source>
</reference>
<reference key="4">
    <citation type="journal article" date="2008" name="Nat. Genet.">
        <title>Gerodermia osteodysplastica is caused by mutations in SCYL1BP1, a Rab-6 interacting golgin.</title>
        <authorList>
            <person name="Hennies H.C."/>
            <person name="Kornak U."/>
            <person name="Zhang H."/>
            <person name="Egerer J."/>
            <person name="Zhang X."/>
            <person name="Seifert W."/>
            <person name="Kuhnisch J."/>
            <person name="Budde B."/>
            <person name="Naetebus M."/>
            <person name="Brancati F."/>
            <person name="Wilcox W.R."/>
            <person name="Mueller D."/>
            <person name="Kaplan P.B."/>
            <person name="Rajab A."/>
            <person name="Zampino G."/>
            <person name="Fodale V."/>
            <person name="Dallapiccola B."/>
            <person name="Newman W."/>
            <person name="Metcalfe K."/>
            <person name="Clayton-Smith J."/>
            <person name="Tassabehji M."/>
            <person name="Steinmann B."/>
            <person name="Barr F.A."/>
            <person name="Nuernberg P."/>
            <person name="Wieacker P."/>
            <person name="Mundlos S."/>
        </authorList>
    </citation>
    <scope>SUBCELLULAR LOCATION</scope>
    <scope>INTERACTION WITH RAB6A</scope>
    <scope>TISSUE SPECIFICITY</scope>
</reference>
<protein>
    <recommendedName>
        <fullName>RAB6-interacting golgin</fullName>
    </recommendedName>
    <alternativeName>
        <fullName>N-terminal kinase-like-binding protein 1</fullName>
        <shortName>NTKL-BP1</shortName>
        <shortName>NTKL-binding protein 1</shortName>
        <shortName>mNTKL-BP1</shortName>
    </alternativeName>
    <alternativeName>
        <fullName>SCY1-like 1-binding protein 1</fullName>
        <shortName>SCYL1-BP1</shortName>
        <shortName>SCYL1-binding protein 1</shortName>
    </alternativeName>
</protein>